<protein>
    <recommendedName>
        <fullName>Nitrate/nitrite sensor protein NarX</fullName>
        <ecNumber>2.7.13.3</ecNumber>
    </recommendedName>
</protein>
<gene>
    <name type="primary">narX</name>
    <name type="ordered locus">Z1998</name>
    <name type="ordered locus">ECs1727</name>
</gene>
<evidence type="ECO:0000250" key="1"/>
<evidence type="ECO:0000255" key="2"/>
<evidence type="ECO:0000255" key="3">
    <source>
        <dbReference type="PROSITE-ProRule" id="PRU00102"/>
    </source>
</evidence>
<evidence type="ECO:0000255" key="4">
    <source>
        <dbReference type="PROSITE-ProRule" id="PRU00107"/>
    </source>
</evidence>
<dbReference type="EC" id="2.7.13.3"/>
<dbReference type="EMBL" id="AE005174">
    <property type="protein sequence ID" value="AAG56082.1"/>
    <property type="molecule type" value="Genomic_DNA"/>
</dbReference>
<dbReference type="EMBL" id="BA000007">
    <property type="protein sequence ID" value="BAB35150.1"/>
    <property type="molecule type" value="Genomic_DNA"/>
</dbReference>
<dbReference type="PIR" id="F85702">
    <property type="entry name" value="F85702"/>
</dbReference>
<dbReference type="PIR" id="G90844">
    <property type="entry name" value="G90844"/>
</dbReference>
<dbReference type="RefSeq" id="NP_309754.1">
    <property type="nucleotide sequence ID" value="NC_002695.1"/>
</dbReference>
<dbReference type="RefSeq" id="WP_000918073.1">
    <property type="nucleotide sequence ID" value="NZ_VOAI01000031.1"/>
</dbReference>
<dbReference type="SMR" id="P0AFA3"/>
<dbReference type="STRING" id="155864.Z1998"/>
<dbReference type="GeneID" id="75203337"/>
<dbReference type="GeneID" id="913134"/>
<dbReference type="KEGG" id="ece:Z1998"/>
<dbReference type="KEGG" id="ecs:ECs_1727"/>
<dbReference type="PATRIC" id="fig|386585.9.peg.1827"/>
<dbReference type="eggNOG" id="COG3850">
    <property type="taxonomic scope" value="Bacteria"/>
</dbReference>
<dbReference type="HOGENOM" id="CLU_000445_20_10_6"/>
<dbReference type="OMA" id="RSNHYGL"/>
<dbReference type="Proteomes" id="UP000000558">
    <property type="component" value="Chromosome"/>
</dbReference>
<dbReference type="Proteomes" id="UP000002519">
    <property type="component" value="Chromosome"/>
</dbReference>
<dbReference type="GO" id="GO:0005886">
    <property type="term" value="C:plasma membrane"/>
    <property type="evidence" value="ECO:0007669"/>
    <property type="project" value="UniProtKB-SubCell"/>
</dbReference>
<dbReference type="GO" id="GO:0005524">
    <property type="term" value="F:ATP binding"/>
    <property type="evidence" value="ECO:0007669"/>
    <property type="project" value="UniProtKB-KW"/>
</dbReference>
<dbReference type="GO" id="GO:0000155">
    <property type="term" value="F:phosphorelay sensor kinase activity"/>
    <property type="evidence" value="ECO:0007669"/>
    <property type="project" value="InterPro"/>
</dbReference>
<dbReference type="GO" id="GO:0046983">
    <property type="term" value="F:protein dimerization activity"/>
    <property type="evidence" value="ECO:0007669"/>
    <property type="project" value="InterPro"/>
</dbReference>
<dbReference type="GO" id="GO:0042128">
    <property type="term" value="P:nitrate assimilation"/>
    <property type="evidence" value="ECO:0007669"/>
    <property type="project" value="UniProtKB-KW"/>
</dbReference>
<dbReference type="CDD" id="cd06225">
    <property type="entry name" value="HAMP"/>
    <property type="match status" value="1"/>
</dbReference>
<dbReference type="CDD" id="cd16917">
    <property type="entry name" value="HATPase_UhpB-NarQ-NarX-like"/>
    <property type="match status" value="1"/>
</dbReference>
<dbReference type="CDD" id="cd22900">
    <property type="entry name" value="NarX_sensor"/>
    <property type="match status" value="1"/>
</dbReference>
<dbReference type="FunFam" id="1.20.5.1930:FF:000002">
    <property type="entry name" value="Sensor protein"/>
    <property type="match status" value="1"/>
</dbReference>
<dbReference type="FunFam" id="3.30.565.10:FF:000029">
    <property type="entry name" value="Sensor protein"/>
    <property type="match status" value="1"/>
</dbReference>
<dbReference type="Gene3D" id="1.20.5.1930">
    <property type="match status" value="1"/>
</dbReference>
<dbReference type="Gene3D" id="6.10.340.10">
    <property type="match status" value="1"/>
</dbReference>
<dbReference type="Gene3D" id="1.20.120.960">
    <property type="entry name" value="Histidine kinase NarX, sensor domain"/>
    <property type="match status" value="1"/>
</dbReference>
<dbReference type="Gene3D" id="3.30.565.10">
    <property type="entry name" value="Histidine kinase-like ATPase, C-terminal domain"/>
    <property type="match status" value="1"/>
</dbReference>
<dbReference type="InterPro" id="IPR003660">
    <property type="entry name" value="HAMP_dom"/>
</dbReference>
<dbReference type="InterPro" id="IPR036890">
    <property type="entry name" value="HATPase_C_sf"/>
</dbReference>
<dbReference type="InterPro" id="IPR005467">
    <property type="entry name" value="His_kinase_dom"/>
</dbReference>
<dbReference type="InterPro" id="IPR029095">
    <property type="entry name" value="NarX-like_N"/>
</dbReference>
<dbReference type="InterPro" id="IPR042295">
    <property type="entry name" value="NarX-like_N_sf"/>
</dbReference>
<dbReference type="InterPro" id="IPR050482">
    <property type="entry name" value="Sensor_HK_TwoCompSys"/>
</dbReference>
<dbReference type="InterPro" id="IPR016380">
    <property type="entry name" value="Sig_transdc_His_kin_NarX/NarQ"/>
</dbReference>
<dbReference type="InterPro" id="IPR011712">
    <property type="entry name" value="Sig_transdc_His_kin_sub3_dim/P"/>
</dbReference>
<dbReference type="NCBIfam" id="NF007896">
    <property type="entry name" value="PRK10600.1"/>
    <property type="match status" value="1"/>
</dbReference>
<dbReference type="PANTHER" id="PTHR24421">
    <property type="entry name" value="NITRATE/NITRITE SENSOR PROTEIN NARX-RELATED"/>
    <property type="match status" value="1"/>
</dbReference>
<dbReference type="PANTHER" id="PTHR24421:SF51">
    <property type="entry name" value="NITRATE_NITRITE SENSOR PROTEIN NARX"/>
    <property type="match status" value="1"/>
</dbReference>
<dbReference type="Pfam" id="PF00672">
    <property type="entry name" value="HAMP"/>
    <property type="match status" value="1"/>
</dbReference>
<dbReference type="Pfam" id="PF02518">
    <property type="entry name" value="HATPase_c"/>
    <property type="match status" value="1"/>
</dbReference>
<dbReference type="Pfam" id="PF07730">
    <property type="entry name" value="HisKA_3"/>
    <property type="match status" value="1"/>
</dbReference>
<dbReference type="Pfam" id="PF13675">
    <property type="entry name" value="PilJ"/>
    <property type="match status" value="1"/>
</dbReference>
<dbReference type="PIRSF" id="PIRSF003167">
    <property type="entry name" value="STHK_NarX/NarQ"/>
    <property type="match status" value="1"/>
</dbReference>
<dbReference type="SMART" id="SM00304">
    <property type="entry name" value="HAMP"/>
    <property type="match status" value="1"/>
</dbReference>
<dbReference type="SMART" id="SM00387">
    <property type="entry name" value="HATPase_c"/>
    <property type="match status" value="1"/>
</dbReference>
<dbReference type="SUPFAM" id="SSF55874">
    <property type="entry name" value="ATPase domain of HSP90 chaperone/DNA topoisomerase II/histidine kinase"/>
    <property type="match status" value="1"/>
</dbReference>
<dbReference type="SUPFAM" id="SSF158472">
    <property type="entry name" value="HAMP domain-like"/>
    <property type="match status" value="1"/>
</dbReference>
<dbReference type="PROSITE" id="PS50885">
    <property type="entry name" value="HAMP"/>
    <property type="match status" value="1"/>
</dbReference>
<dbReference type="PROSITE" id="PS50109">
    <property type="entry name" value="HIS_KIN"/>
    <property type="match status" value="1"/>
</dbReference>
<reference key="1">
    <citation type="journal article" date="2001" name="Nature">
        <title>Genome sequence of enterohaemorrhagic Escherichia coli O157:H7.</title>
        <authorList>
            <person name="Perna N.T."/>
            <person name="Plunkett G. III"/>
            <person name="Burland V."/>
            <person name="Mau B."/>
            <person name="Glasner J.D."/>
            <person name="Rose D.J."/>
            <person name="Mayhew G.F."/>
            <person name="Evans P.S."/>
            <person name="Gregor J."/>
            <person name="Kirkpatrick H.A."/>
            <person name="Posfai G."/>
            <person name="Hackett J."/>
            <person name="Klink S."/>
            <person name="Boutin A."/>
            <person name="Shao Y."/>
            <person name="Miller L."/>
            <person name="Grotbeck E.J."/>
            <person name="Davis N.W."/>
            <person name="Lim A."/>
            <person name="Dimalanta E.T."/>
            <person name="Potamousis K."/>
            <person name="Apodaca J."/>
            <person name="Anantharaman T.S."/>
            <person name="Lin J."/>
            <person name="Yen G."/>
            <person name="Schwartz D.C."/>
            <person name="Welch R.A."/>
            <person name="Blattner F.R."/>
        </authorList>
    </citation>
    <scope>NUCLEOTIDE SEQUENCE [LARGE SCALE GENOMIC DNA]</scope>
    <source>
        <strain>O157:H7 / EDL933 / ATCC 700927 / EHEC</strain>
    </source>
</reference>
<reference key="2">
    <citation type="journal article" date="2001" name="DNA Res.">
        <title>Complete genome sequence of enterohemorrhagic Escherichia coli O157:H7 and genomic comparison with a laboratory strain K-12.</title>
        <authorList>
            <person name="Hayashi T."/>
            <person name="Makino K."/>
            <person name="Ohnishi M."/>
            <person name="Kurokawa K."/>
            <person name="Ishii K."/>
            <person name="Yokoyama K."/>
            <person name="Han C.-G."/>
            <person name="Ohtsubo E."/>
            <person name="Nakayama K."/>
            <person name="Murata T."/>
            <person name="Tanaka M."/>
            <person name="Tobe T."/>
            <person name="Iida T."/>
            <person name="Takami H."/>
            <person name="Honda T."/>
            <person name="Sasakawa C."/>
            <person name="Ogasawara N."/>
            <person name="Yasunaga T."/>
            <person name="Kuhara S."/>
            <person name="Shiba T."/>
            <person name="Hattori M."/>
            <person name="Shinagawa H."/>
        </authorList>
    </citation>
    <scope>NUCLEOTIDE SEQUENCE [LARGE SCALE GENOMIC DNA]</scope>
    <source>
        <strain>O157:H7 / Sakai / RIMD 0509952 / EHEC</strain>
    </source>
</reference>
<proteinExistence type="inferred from homology"/>
<name>NARX_ECO57</name>
<accession>P0AFA3</accession>
<accession>P10956</accession>
<sequence length="598" mass="67084">MLKRCLSPLTLVNQVALIVLLSTAIGLAGMAVSGWLVQGVQGSAHAINKAGSLRMQSYRLLAAVPLSEKDKPLIKEMEQTAFSAELTRAAERDGQLAQLQGLQDYWRNELIPALMRAQNRETVSADVSQFVAGLDQLVSGFDRTTEMRIETVVLVHRVMAVFMALLLVFTIIWLRARLLQPWRQLLAMASAVSHRDFTQRANISGRNEMAMLGTALNNMSAELAESYAVLEQRVQEKTAGLEHKNQILSFLWQANRRLHSRAPLCERLSPVLNGLQNLTLLRDIELRVYDTDDEENHQEFTCQPDMTCDDKGCQLCPRGVLPVGDRGTTLKWRLADSHTQYGILLATLPQGRHLSHDQQQLVDTLVEQLTATLALDRHQERQQQLIVMEERATIARELHDSIAQSLSCMKMQVSCLQMQGDALPESSRELLSQIRNELNASWAQLRELLTTFRLQLTEPGLRPALEASCEEYSAKFGFPVKLDYQLPPRLVPSHQAIHLLQIAREALSNALKHSQASEVVVTVAQNDNQVKLTVQDNGCGVPENAIRSNHYGMIIMRDRAQSLRGDCRVRRRESGGTEVVVTFIPEKTFTDVQGDTHE</sequence>
<keyword id="KW-0067">ATP-binding</keyword>
<keyword id="KW-0997">Cell inner membrane</keyword>
<keyword id="KW-1003">Cell membrane</keyword>
<keyword id="KW-0418">Kinase</keyword>
<keyword id="KW-0472">Membrane</keyword>
<keyword id="KW-0534">Nitrate assimilation</keyword>
<keyword id="KW-0547">Nucleotide-binding</keyword>
<keyword id="KW-0597">Phosphoprotein</keyword>
<keyword id="KW-1185">Reference proteome</keyword>
<keyword id="KW-0808">Transferase</keyword>
<keyword id="KW-0812">Transmembrane</keyword>
<keyword id="KW-1133">Transmembrane helix</keyword>
<keyword id="KW-0902">Two-component regulatory system</keyword>
<comment type="function">
    <text evidence="1">Acts as a sensor for nitrate/nitrite and transduces signal of nitrate availability to the NarL protein and of both nitrate/nitrite to the NarP protein. NarX probably activates NarL and NarP by phosphorylation in the presence of nitrate. NarX also plays a negative role in controlling NarL activity, probably through dephosphorylation in the absence of nitrate (By similarity).</text>
</comment>
<comment type="catalytic activity">
    <reaction>
        <text>ATP + protein L-histidine = ADP + protein N-phospho-L-histidine.</text>
        <dbReference type="EC" id="2.7.13.3"/>
    </reaction>
</comment>
<comment type="subcellular location">
    <subcellularLocation>
        <location evidence="1">Cell inner membrane</location>
        <topology evidence="1">Multi-pass membrane protein</topology>
    </subcellularLocation>
</comment>
<feature type="chain" id="PRO_0000074813" description="Nitrate/nitrite sensor protein NarX">
    <location>
        <begin position="1"/>
        <end position="598"/>
    </location>
</feature>
<feature type="topological domain" description="Cytoplasmic" evidence="2">
    <location>
        <begin position="1"/>
        <end position="14"/>
    </location>
</feature>
<feature type="transmembrane region" description="Helical" evidence="2">
    <location>
        <begin position="15"/>
        <end position="37"/>
    </location>
</feature>
<feature type="topological domain" description="Periplasmic" evidence="2">
    <location>
        <begin position="38"/>
        <end position="151"/>
    </location>
</feature>
<feature type="transmembrane region" description="Helical" evidence="2">
    <location>
        <begin position="152"/>
        <end position="174"/>
    </location>
</feature>
<feature type="topological domain" description="Cytoplasmic" evidence="2">
    <location>
        <begin position="175"/>
        <end position="598"/>
    </location>
</feature>
<feature type="domain" description="HAMP" evidence="3">
    <location>
        <begin position="176"/>
        <end position="228"/>
    </location>
</feature>
<feature type="domain" description="Histidine kinase" evidence="4">
    <location>
        <begin position="393"/>
        <end position="587"/>
    </location>
</feature>
<feature type="modified residue" description="Phosphohistidine; by autocatalysis" evidence="4">
    <location>
        <position position="399"/>
    </location>
</feature>
<organism>
    <name type="scientific">Escherichia coli O157:H7</name>
    <dbReference type="NCBI Taxonomy" id="83334"/>
    <lineage>
        <taxon>Bacteria</taxon>
        <taxon>Pseudomonadati</taxon>
        <taxon>Pseudomonadota</taxon>
        <taxon>Gammaproteobacteria</taxon>
        <taxon>Enterobacterales</taxon>
        <taxon>Enterobacteriaceae</taxon>
        <taxon>Escherichia</taxon>
    </lineage>
</organism>